<keyword id="KW-0002">3D-structure</keyword>
<keyword id="KW-0025">Alternative splicing</keyword>
<keyword id="KW-0963">Cytoplasm</keyword>
<keyword id="KW-0206">Cytoskeleton</keyword>
<keyword id="KW-0254">Endocytosis</keyword>
<keyword id="KW-0333">Golgi apparatus</keyword>
<keyword id="KW-0378">Hydrolase</keyword>
<keyword id="KW-0479">Metal-binding</keyword>
<keyword id="KW-0597">Phosphoprotein</keyword>
<keyword id="KW-0645">Protease</keyword>
<keyword id="KW-1267">Proteomics identification</keyword>
<keyword id="KW-1185">Reference proteome</keyword>
<keyword id="KW-0677">Repeat</keyword>
<keyword id="KW-0788">Thiol protease</keyword>
<keyword id="KW-0832">Ubl conjugation</keyword>
<keyword id="KW-0833">Ubl conjugation pathway</keyword>
<keyword id="KW-0862">Zinc</keyword>
<keyword id="KW-0863">Zinc-finger</keyword>
<accession>Q8TEY7</accession>
<accession>Q8TEY6</accession>
<accession>Q96AV6</accession>
<accession>Q9H9F0</accession>
<accession>Q9UPQ5</accession>
<evidence type="ECO:0000255" key="1">
    <source>
        <dbReference type="PROSITE-ProRule" id="PRU00502"/>
    </source>
</evidence>
<evidence type="ECO:0000255" key="2">
    <source>
        <dbReference type="PROSITE-ProRule" id="PRU00613"/>
    </source>
</evidence>
<evidence type="ECO:0000255" key="3">
    <source>
        <dbReference type="PROSITE-ProRule" id="PRU10092"/>
    </source>
</evidence>
<evidence type="ECO:0000255" key="4">
    <source>
        <dbReference type="PROSITE-ProRule" id="PRU10093"/>
    </source>
</evidence>
<evidence type="ECO:0000256" key="5">
    <source>
        <dbReference type="SAM" id="MobiDB-lite"/>
    </source>
</evidence>
<evidence type="ECO:0000269" key="6">
    <source>
    </source>
</evidence>
<evidence type="ECO:0000269" key="7">
    <source>
    </source>
</evidence>
<evidence type="ECO:0000269" key="8">
    <source>
    </source>
</evidence>
<evidence type="ECO:0000269" key="9">
    <source>
    </source>
</evidence>
<evidence type="ECO:0000269" key="10">
    <source>
    </source>
</evidence>
<evidence type="ECO:0000269" key="11">
    <source>
    </source>
</evidence>
<evidence type="ECO:0000269" key="12">
    <source>
    </source>
</evidence>
<evidence type="ECO:0000269" key="13">
    <source>
    </source>
</evidence>
<evidence type="ECO:0000269" key="14">
    <source>
    </source>
</evidence>
<evidence type="ECO:0000303" key="15">
    <source>
    </source>
</evidence>
<evidence type="ECO:0000303" key="16">
    <source>
    </source>
</evidence>
<evidence type="ECO:0000303" key="17">
    <source>
    </source>
</evidence>
<evidence type="ECO:0000303" key="18">
    <source>
    </source>
</evidence>
<evidence type="ECO:0000305" key="19"/>
<evidence type="ECO:0007744" key="20">
    <source>
    </source>
</evidence>
<evidence type="ECO:0007744" key="21">
    <source>
    </source>
</evidence>
<evidence type="ECO:0007829" key="22">
    <source>
        <dbReference type="PDB" id="2UZG"/>
    </source>
</evidence>
<comment type="function">
    <text evidence="7 10 11 14">Deubiquitinating enzyme involved in various processes such as centrosome duplication, cellular migration and beta-2 adrenergic receptor/ADRB2 recycling. Involved in regulation of centrosome duplication by mediating deubiquitination of CCP110 in S and G2/M phase, leading to stabilize CCP110 during the period which centrioles duplicate and elongate. Involved in cell migration via its interaction with intracellular domain of ROBO1, leading to regulate the Slit signaling. Plays a role in commissural axon guidance cross the ventral midline of the neural tube in a Slit-dependent manner, possibly by mediating the deubiquitination of ROBO1. Acts as a regulator of G-protein coupled receptor (GPCR) signaling by mediating the deubiquitination of beta-arrestins (ARRB1 and ARRB2) and beta-2 adrenergic receptor (ADRB2). Plays a central role in ADRB2 recycling and resensitization after prolonged agonist stimulation by constitutively binding ADRB2, mediating deubiquitination of ADRB2 and inhibiting lysosomal trafficking of ADRB2. Upon dissociation, it is probably transferred to the translocated beta-arrestins, leading to beta-arrestins deubiquitination and disengagement from ADRB2. This suggests the existence of a dynamic exchange between the ADRB2 and beta-arrestins. Deubiquitinates DIO2, thereby regulating thyroid hormone regulation. Mediates deubiquitination of both 'Lys-48'- and 'Lys-63'-linked polyubiquitin chains.</text>
</comment>
<comment type="catalytic activity">
    <reaction>
        <text>Thiol-dependent hydrolysis of ester, thioester, amide, peptide and isopeptide bonds formed by the C-terminal Gly of ubiquitin (a 76-residue protein attached to proteins as an intracellular targeting signal).</text>
        <dbReference type="EC" id="3.4.19.12"/>
    </reaction>
</comment>
<comment type="subunit">
    <text evidence="6 7 9 10 11 13 14">Interacts with VHL, leading to its ubiquitination and subsequent degradation (PubMed:11739384). Interacts with ARRB1 and ARRB2 (PubMed:19363159). Interacts with ADRB2 (PubMed:19424180, PubMed:23166351). Interacts with DIO2 (PubMed:12865408). Interacts with ROBO1. Interacts with SELENBP1; in a selenium-dependent manner (PubMed:19118533). Interacts with CCP110 (PubMed:23486064).</text>
</comment>
<comment type="interaction">
    <interactant intactId="EBI-719283">
        <id>Q8TEY7</id>
    </interactant>
    <interactant intactId="EBI-297353">
        <id>P00533</id>
        <label>EGFR</label>
    </interactant>
    <organismsDiffer>false</organismsDiffer>
    <experiments>2</experiments>
</comment>
<comment type="interaction">
    <interactant intactId="EBI-719307">
        <id>Q8TEY7-2</id>
    </interactant>
    <interactant intactId="EBI-711619">
        <id>Q13228</id>
        <label>SELENBP1</label>
    </interactant>
    <organismsDiffer>false</organismsDiffer>
    <experiments>5</experiments>
</comment>
<comment type="subcellular location">
    <subcellularLocation>
        <location evidence="9">Cytoplasm</location>
        <location evidence="9">Perinuclear region</location>
    </subcellularLocation>
    <subcellularLocation>
        <location evidence="14">Cytoplasm</location>
        <location evidence="14">Cytoskeleton</location>
        <location evidence="14">Microtubule organizing center</location>
        <location evidence="14">Centrosome</location>
    </subcellularLocation>
    <text evidence="14">Associates with centrosomes predominantly in S and G2 phases but less in G1 phase (PubMed:23486064).</text>
</comment>
<comment type="subcellular location">
    <molecule>Isoform 3</molecule>
    <subcellularLocation>
        <location evidence="12">Golgi apparatus</location>
    </subcellularLocation>
</comment>
<comment type="alternative products">
    <event type="alternative splicing"/>
    <isoform>
        <id>Q8TEY7-1</id>
        <name>1</name>
        <sequence type="displayed"/>
    </isoform>
    <isoform>
        <id>Q8TEY7-2</id>
        <name>2</name>
        <sequence type="described" ref="VSP_008591"/>
    </isoform>
    <isoform>
        <id>Q8TEY7-3</id>
        <name>3</name>
        <sequence type="described" ref="VSP_008592 VSP_008593 VSP_008594"/>
    </isoform>
</comment>
<comment type="tissue specificity">
    <text evidence="6">Widely expressed.</text>
</comment>
<comment type="developmental stage">
    <text evidence="14">Increased expression in S and early G2 phases and lower levels in late G2 and M phases.</text>
</comment>
<comment type="domain">
    <text evidence="8">The UBP-type zinc finger binds 3 zinc ions. However, it does not bind ubiquitin, probably because the conserved Arg in position 86 is replaced by a Glu residue.</text>
</comment>
<comment type="PTM">
    <text evidence="6">Ubiquitinated via a VHL-dependent pathway for proteasomal degradation.</text>
</comment>
<comment type="similarity">
    <text evidence="19">Belongs to the peptidase C19 family. USP20/USP33 subfamily.</text>
</comment>
<comment type="sequence caution" evidence="19">
    <conflict type="erroneous initiation">
        <sequence resource="EMBL-CDS" id="BAA83049"/>
    </conflict>
</comment>
<reference key="1">
    <citation type="journal article" date="2002" name="J. Biol. Chem.">
        <title>Ubiquitination of a novel deubiquitinating enzyme requires direct binding to von Hippel-Lindau tumor suppressor protein.</title>
        <authorList>
            <person name="Li Z."/>
            <person name="Na X."/>
            <person name="Wang D."/>
            <person name="Schoen S.R."/>
            <person name="Messing E.M."/>
            <person name="Wu G."/>
        </authorList>
    </citation>
    <scope>NUCLEOTIDE SEQUENCE [MRNA] (ISOFORMS 1 AND 2)</scope>
    <scope>UBIQUITINATION</scope>
    <scope>INTERACTION WITH VHL</scope>
    <scope>TISSUE SPECIFICITY</scope>
</reference>
<reference key="2">
    <citation type="journal article" date="1999" name="DNA Res.">
        <title>Prediction of the coding sequences of unidentified human genes. XIV. The complete sequences of 100 new cDNA clones from brain which code for large proteins in vitro.</title>
        <authorList>
            <person name="Kikuno R."/>
            <person name="Nagase T."/>
            <person name="Ishikawa K."/>
            <person name="Hirosawa M."/>
            <person name="Miyajima N."/>
            <person name="Tanaka A."/>
            <person name="Kotani H."/>
            <person name="Nomura N."/>
            <person name="Ohara O."/>
        </authorList>
    </citation>
    <scope>NUCLEOTIDE SEQUENCE [LARGE SCALE MRNA] (ISOFORM 2)</scope>
    <source>
        <tissue>Brain</tissue>
    </source>
</reference>
<reference key="3">
    <citation type="journal article" date="2004" name="Nat. Genet.">
        <title>Complete sequencing and characterization of 21,243 full-length human cDNAs.</title>
        <authorList>
            <person name="Ota T."/>
            <person name="Suzuki Y."/>
            <person name="Nishikawa T."/>
            <person name="Otsuki T."/>
            <person name="Sugiyama T."/>
            <person name="Irie R."/>
            <person name="Wakamatsu A."/>
            <person name="Hayashi K."/>
            <person name="Sato H."/>
            <person name="Nagai K."/>
            <person name="Kimura K."/>
            <person name="Makita H."/>
            <person name="Sekine M."/>
            <person name="Obayashi M."/>
            <person name="Nishi T."/>
            <person name="Shibahara T."/>
            <person name="Tanaka T."/>
            <person name="Ishii S."/>
            <person name="Yamamoto J."/>
            <person name="Saito K."/>
            <person name="Kawai Y."/>
            <person name="Isono Y."/>
            <person name="Nakamura Y."/>
            <person name="Nagahari K."/>
            <person name="Murakami K."/>
            <person name="Yasuda T."/>
            <person name="Iwayanagi T."/>
            <person name="Wagatsuma M."/>
            <person name="Shiratori A."/>
            <person name="Sudo H."/>
            <person name="Hosoiri T."/>
            <person name="Kaku Y."/>
            <person name="Kodaira H."/>
            <person name="Kondo H."/>
            <person name="Sugawara M."/>
            <person name="Takahashi M."/>
            <person name="Kanda K."/>
            <person name="Yokoi T."/>
            <person name="Furuya T."/>
            <person name="Kikkawa E."/>
            <person name="Omura Y."/>
            <person name="Abe K."/>
            <person name="Kamihara K."/>
            <person name="Katsuta N."/>
            <person name="Sato K."/>
            <person name="Tanikawa M."/>
            <person name="Yamazaki M."/>
            <person name="Ninomiya K."/>
            <person name="Ishibashi T."/>
            <person name="Yamashita H."/>
            <person name="Murakawa K."/>
            <person name="Fujimori K."/>
            <person name="Tanai H."/>
            <person name="Kimata M."/>
            <person name="Watanabe M."/>
            <person name="Hiraoka S."/>
            <person name="Chiba Y."/>
            <person name="Ishida S."/>
            <person name="Ono Y."/>
            <person name="Takiguchi S."/>
            <person name="Watanabe S."/>
            <person name="Yosida M."/>
            <person name="Hotuta T."/>
            <person name="Kusano J."/>
            <person name="Kanehori K."/>
            <person name="Takahashi-Fujii A."/>
            <person name="Hara H."/>
            <person name="Tanase T.-O."/>
            <person name="Nomura Y."/>
            <person name="Togiya S."/>
            <person name="Komai F."/>
            <person name="Hara R."/>
            <person name="Takeuchi K."/>
            <person name="Arita M."/>
            <person name="Imose N."/>
            <person name="Musashino K."/>
            <person name="Yuuki H."/>
            <person name="Oshima A."/>
            <person name="Sasaki N."/>
            <person name="Aotsuka S."/>
            <person name="Yoshikawa Y."/>
            <person name="Matsunawa H."/>
            <person name="Ichihara T."/>
            <person name="Shiohata N."/>
            <person name="Sano S."/>
            <person name="Moriya S."/>
            <person name="Momiyama H."/>
            <person name="Satoh N."/>
            <person name="Takami S."/>
            <person name="Terashima Y."/>
            <person name="Suzuki O."/>
            <person name="Nakagawa S."/>
            <person name="Senoh A."/>
            <person name="Mizoguchi H."/>
            <person name="Goto Y."/>
            <person name="Shimizu F."/>
            <person name="Wakebe H."/>
            <person name="Hishigaki H."/>
            <person name="Watanabe T."/>
            <person name="Sugiyama A."/>
            <person name="Takemoto M."/>
            <person name="Kawakami B."/>
            <person name="Yamazaki M."/>
            <person name="Watanabe K."/>
            <person name="Kumagai A."/>
            <person name="Itakura S."/>
            <person name="Fukuzumi Y."/>
            <person name="Fujimori Y."/>
            <person name="Komiyama M."/>
            <person name="Tashiro H."/>
            <person name="Tanigami A."/>
            <person name="Fujiwara T."/>
            <person name="Ono T."/>
            <person name="Yamada K."/>
            <person name="Fujii Y."/>
            <person name="Ozaki K."/>
            <person name="Hirao M."/>
            <person name="Ohmori Y."/>
            <person name="Kawabata A."/>
            <person name="Hikiji T."/>
            <person name="Kobatake N."/>
            <person name="Inagaki H."/>
            <person name="Ikema Y."/>
            <person name="Okamoto S."/>
            <person name="Okitani R."/>
            <person name="Kawakami T."/>
            <person name="Noguchi S."/>
            <person name="Itoh T."/>
            <person name="Shigeta K."/>
            <person name="Senba T."/>
            <person name="Matsumura K."/>
            <person name="Nakajima Y."/>
            <person name="Mizuno T."/>
            <person name="Morinaga M."/>
            <person name="Sasaki M."/>
            <person name="Togashi T."/>
            <person name="Oyama M."/>
            <person name="Hata H."/>
            <person name="Watanabe M."/>
            <person name="Komatsu T."/>
            <person name="Mizushima-Sugano J."/>
            <person name="Satoh T."/>
            <person name="Shirai Y."/>
            <person name="Takahashi Y."/>
            <person name="Nakagawa K."/>
            <person name="Okumura K."/>
            <person name="Nagase T."/>
            <person name="Nomura N."/>
            <person name="Kikuchi H."/>
            <person name="Masuho Y."/>
            <person name="Yamashita R."/>
            <person name="Nakai K."/>
            <person name="Yada T."/>
            <person name="Nakamura Y."/>
            <person name="Ohara O."/>
            <person name="Isogai T."/>
            <person name="Sugano S."/>
        </authorList>
    </citation>
    <scope>NUCLEOTIDE SEQUENCE [LARGE SCALE MRNA] (ISOFORM 3)</scope>
</reference>
<reference key="4">
    <citation type="journal article" date="2006" name="Nature">
        <title>The DNA sequence and biological annotation of human chromosome 1.</title>
        <authorList>
            <person name="Gregory S.G."/>
            <person name="Barlow K.F."/>
            <person name="McLay K.E."/>
            <person name="Kaul R."/>
            <person name="Swarbreck D."/>
            <person name="Dunham A."/>
            <person name="Scott C.E."/>
            <person name="Howe K.L."/>
            <person name="Woodfine K."/>
            <person name="Spencer C.C.A."/>
            <person name="Jones M.C."/>
            <person name="Gillson C."/>
            <person name="Searle S."/>
            <person name="Zhou Y."/>
            <person name="Kokocinski F."/>
            <person name="McDonald L."/>
            <person name="Evans R."/>
            <person name="Phillips K."/>
            <person name="Atkinson A."/>
            <person name="Cooper R."/>
            <person name="Jones C."/>
            <person name="Hall R.E."/>
            <person name="Andrews T.D."/>
            <person name="Lloyd C."/>
            <person name="Ainscough R."/>
            <person name="Almeida J.P."/>
            <person name="Ambrose K.D."/>
            <person name="Anderson F."/>
            <person name="Andrew R.W."/>
            <person name="Ashwell R.I.S."/>
            <person name="Aubin K."/>
            <person name="Babbage A.K."/>
            <person name="Bagguley C.L."/>
            <person name="Bailey J."/>
            <person name="Beasley H."/>
            <person name="Bethel G."/>
            <person name="Bird C.P."/>
            <person name="Bray-Allen S."/>
            <person name="Brown J.Y."/>
            <person name="Brown A.J."/>
            <person name="Buckley D."/>
            <person name="Burton J."/>
            <person name="Bye J."/>
            <person name="Carder C."/>
            <person name="Chapman J.C."/>
            <person name="Clark S.Y."/>
            <person name="Clarke G."/>
            <person name="Clee C."/>
            <person name="Cobley V."/>
            <person name="Collier R.E."/>
            <person name="Corby N."/>
            <person name="Coville G.J."/>
            <person name="Davies J."/>
            <person name="Deadman R."/>
            <person name="Dunn M."/>
            <person name="Earthrowl M."/>
            <person name="Ellington A.G."/>
            <person name="Errington H."/>
            <person name="Frankish A."/>
            <person name="Frankland J."/>
            <person name="French L."/>
            <person name="Garner P."/>
            <person name="Garnett J."/>
            <person name="Gay L."/>
            <person name="Ghori M.R.J."/>
            <person name="Gibson R."/>
            <person name="Gilby L.M."/>
            <person name="Gillett W."/>
            <person name="Glithero R.J."/>
            <person name="Grafham D.V."/>
            <person name="Griffiths C."/>
            <person name="Griffiths-Jones S."/>
            <person name="Grocock R."/>
            <person name="Hammond S."/>
            <person name="Harrison E.S.I."/>
            <person name="Hart E."/>
            <person name="Haugen E."/>
            <person name="Heath P.D."/>
            <person name="Holmes S."/>
            <person name="Holt K."/>
            <person name="Howden P.J."/>
            <person name="Hunt A.R."/>
            <person name="Hunt S.E."/>
            <person name="Hunter G."/>
            <person name="Isherwood J."/>
            <person name="James R."/>
            <person name="Johnson C."/>
            <person name="Johnson D."/>
            <person name="Joy A."/>
            <person name="Kay M."/>
            <person name="Kershaw J.K."/>
            <person name="Kibukawa M."/>
            <person name="Kimberley A.M."/>
            <person name="King A."/>
            <person name="Knights A.J."/>
            <person name="Lad H."/>
            <person name="Laird G."/>
            <person name="Lawlor S."/>
            <person name="Leongamornlert D.A."/>
            <person name="Lloyd D.M."/>
            <person name="Loveland J."/>
            <person name="Lovell J."/>
            <person name="Lush M.J."/>
            <person name="Lyne R."/>
            <person name="Martin S."/>
            <person name="Mashreghi-Mohammadi M."/>
            <person name="Matthews L."/>
            <person name="Matthews N.S.W."/>
            <person name="McLaren S."/>
            <person name="Milne S."/>
            <person name="Mistry S."/>
            <person name="Moore M.J.F."/>
            <person name="Nickerson T."/>
            <person name="O'Dell C.N."/>
            <person name="Oliver K."/>
            <person name="Palmeiri A."/>
            <person name="Palmer S.A."/>
            <person name="Parker A."/>
            <person name="Patel D."/>
            <person name="Pearce A.V."/>
            <person name="Peck A.I."/>
            <person name="Pelan S."/>
            <person name="Phelps K."/>
            <person name="Phillimore B.J."/>
            <person name="Plumb R."/>
            <person name="Rajan J."/>
            <person name="Raymond C."/>
            <person name="Rouse G."/>
            <person name="Saenphimmachak C."/>
            <person name="Sehra H.K."/>
            <person name="Sheridan E."/>
            <person name="Shownkeen R."/>
            <person name="Sims S."/>
            <person name="Skuce C.D."/>
            <person name="Smith M."/>
            <person name="Steward C."/>
            <person name="Subramanian S."/>
            <person name="Sycamore N."/>
            <person name="Tracey A."/>
            <person name="Tromans A."/>
            <person name="Van Helmond Z."/>
            <person name="Wall M."/>
            <person name="Wallis J.M."/>
            <person name="White S."/>
            <person name="Whitehead S.L."/>
            <person name="Wilkinson J.E."/>
            <person name="Willey D.L."/>
            <person name="Williams H."/>
            <person name="Wilming L."/>
            <person name="Wray P.W."/>
            <person name="Wu Z."/>
            <person name="Coulson A."/>
            <person name="Vaudin M."/>
            <person name="Sulston J.E."/>
            <person name="Durbin R.M."/>
            <person name="Hubbard T."/>
            <person name="Wooster R."/>
            <person name="Dunham I."/>
            <person name="Carter N.P."/>
            <person name="McVean G."/>
            <person name="Ross M.T."/>
            <person name="Harrow J."/>
            <person name="Olson M.V."/>
            <person name="Beck S."/>
            <person name="Rogers J."/>
            <person name="Bentley D.R."/>
        </authorList>
    </citation>
    <scope>NUCLEOTIDE SEQUENCE [LARGE SCALE GENOMIC DNA]</scope>
</reference>
<reference key="5">
    <citation type="journal article" date="2004" name="Genome Res.">
        <title>The status, quality, and expansion of the NIH full-length cDNA project: the Mammalian Gene Collection (MGC).</title>
        <authorList>
            <consortium name="The MGC Project Team"/>
        </authorList>
    </citation>
    <scope>NUCLEOTIDE SEQUENCE [LARGE SCALE MRNA] (ISOFORM 3)</scope>
    <source>
        <tissue>Eye</tissue>
    </source>
</reference>
<reference key="6">
    <citation type="journal article" date="2003" name="J. Clin. Invest.">
        <title>Deubiquitination of type 2 iodothyronine deiodinase by von Hippel-Lindau protein-interacting deubiquitinating enzymes regulates thyroid hormone activation.</title>
        <authorList>
            <person name="Curcio-Morelli C."/>
            <person name="Zavacki A.M."/>
            <person name="Christofollete M."/>
            <person name="Gereben B."/>
            <person name="de Freitas B.C."/>
            <person name="Harney J.W."/>
            <person name="Li Z."/>
            <person name="Wu G."/>
            <person name="Bianco A.C."/>
        </authorList>
    </citation>
    <scope>FUNCTION</scope>
    <scope>INTERACTION WITH DIO2</scope>
</reference>
<reference key="7">
    <citation type="journal article" date="2008" name="Proc. Natl. Acad. Sci. U.S.A.">
        <title>A quantitative atlas of mitotic phosphorylation.</title>
        <authorList>
            <person name="Dephoure N."/>
            <person name="Zhou C."/>
            <person name="Villen J."/>
            <person name="Beausoleil S.A."/>
            <person name="Bakalarski C.E."/>
            <person name="Elledge S.J."/>
            <person name="Gygi S.P."/>
        </authorList>
    </citation>
    <scope>PHOSPHORYLATION [LARGE SCALE ANALYSIS] AT SER-439</scope>
    <scope>IDENTIFICATION BY MASS SPECTROMETRY [LARGE SCALE ANALYSIS]</scope>
    <source>
        <tissue>Cervix carcinoma</tissue>
    </source>
</reference>
<reference key="8">
    <citation type="journal article" date="2009" name="Biochem. Biophys. Res. Commun.">
        <title>Human selenium binding protein-1 (hSP56) interacts with VDU1 in a selenium-dependent manner.</title>
        <authorList>
            <person name="Jeong J.Y."/>
            <person name="Wang Y."/>
            <person name="Sytkowski A.J."/>
        </authorList>
    </citation>
    <scope>INTERACTION WITH SELENBP1</scope>
    <scope>SUBCELLULAR LOCATION</scope>
</reference>
<reference key="9">
    <citation type="journal article" date="2009" name="EMBO J.">
        <title>The deubiquitinases USP33 and USP20 coordinate beta2 adrenergic receptor recycling and resensitization.</title>
        <authorList>
            <person name="Berthouze M."/>
            <person name="Venkataramanan V."/>
            <person name="Li Y."/>
            <person name="Shenoy S.K."/>
        </authorList>
    </citation>
    <scope>FUNCTION</scope>
    <scope>INTERACTION WITH ADRB2</scope>
    <scope>MUTAGENESIS OF CYS-194 AND HIS-673</scope>
</reference>
<reference key="10">
    <citation type="journal article" date="2009" name="Proc. Natl. Acad. Sci. U.S.A.">
        <title>Beta-arrestin-dependent signaling and trafficking of 7-transmembrane receptors is reciprocally regulated by the deubiquitinase USP33 and the E3 ligase Mdm2.</title>
        <authorList>
            <person name="Shenoy S.K."/>
            <person name="Modi A.S."/>
            <person name="Shukla A.K."/>
            <person name="Xiao K."/>
            <person name="Berthouze M."/>
            <person name="Ahn S."/>
            <person name="Wilkinson K.D."/>
            <person name="Miller W.E."/>
            <person name="Lefkowitz R.J."/>
        </authorList>
    </citation>
    <scope>FUNCTION</scope>
    <scope>INTERACTION WITH ARRB1 AND ARRB2</scope>
    <scope>MUTAGENESIS OF CYS-194 AND HIS-673</scope>
</reference>
<reference key="11">
    <citation type="journal article" date="2011" name="Traffic">
        <title>Isoform-specific localization of the deubiquitinase USP33 to the Golgi apparatus.</title>
        <authorList>
            <person name="Thorne C."/>
            <person name="Eccles R.L."/>
            <person name="Coulson J.M."/>
            <person name="Urbe S."/>
            <person name="Clague M.J."/>
        </authorList>
    </citation>
    <scope>ALTERNATIVE SPLICING (ISOFORM 3)</scope>
    <scope>SUBCELLULAR LOCATION</scope>
</reference>
<reference key="12">
    <citation type="journal article" date="2012" name="J. Cell Biol.">
        <title>MARCH2 promotes endocytosis and lysosomal sorting of carvedilol-bound beta(2)-adrenergic receptors.</title>
        <authorList>
            <person name="Han S.O."/>
            <person name="Xiao K."/>
            <person name="Kim J."/>
            <person name="Wu J.H."/>
            <person name="Wisler J.W."/>
            <person name="Nakamura N."/>
            <person name="Freedman N.J."/>
            <person name="Shenoy S.K."/>
        </authorList>
    </citation>
    <scope>INTERACTION WITH ADRB2</scope>
</reference>
<reference key="13">
    <citation type="journal article" date="2013" name="Nature">
        <title>USP33 regulates centrosome biogenesis via deubiquitination of the centriolar protein CP110.</title>
        <authorList>
            <person name="Li J."/>
            <person name="D'Angiolella V."/>
            <person name="Seeley E.S."/>
            <person name="Kim S."/>
            <person name="Kobayashi T."/>
            <person name="Fu W."/>
            <person name="Campos E.I."/>
            <person name="Pagano M."/>
            <person name="Dynlacht B.D."/>
        </authorList>
    </citation>
    <scope>FUNCTION</scope>
    <scope>SUBCELLULAR LOCATION</scope>
    <scope>INTERACTION WITH CCP110</scope>
    <scope>DEVELOPMENTAL STAGE</scope>
    <scope>MUTAGENESIS OF CYS-194 AND HIS-673</scope>
</reference>
<reference key="14">
    <citation type="journal article" date="2014" name="J. Proteomics">
        <title>An enzyme assisted RP-RPLC approach for in-depth analysis of human liver phosphoproteome.</title>
        <authorList>
            <person name="Bian Y."/>
            <person name="Song C."/>
            <person name="Cheng K."/>
            <person name="Dong M."/>
            <person name="Wang F."/>
            <person name="Huang J."/>
            <person name="Sun D."/>
            <person name="Wang L."/>
            <person name="Ye M."/>
            <person name="Zou H."/>
        </authorList>
    </citation>
    <scope>PHOSPHORYLATION [LARGE SCALE ANALYSIS] AT SER-377</scope>
    <scope>IDENTIFICATION BY MASS SPECTROMETRY [LARGE SCALE ANALYSIS]</scope>
    <source>
        <tissue>Liver</tissue>
    </source>
</reference>
<reference key="15">
    <citation type="journal article" date="2007" name="Protein Sci.">
        <title>The solution structure of the ZnF UBP domain of USP33/VDU1.</title>
        <authorList>
            <person name="Allen M.D."/>
            <person name="Bycroft M."/>
        </authorList>
    </citation>
    <scope>STRUCTURE BY NMR OF 36-130</scope>
    <scope>ZINC-BINDING</scope>
    <scope>DOMAIN UBP-TYPE ZINC FINGER</scope>
</reference>
<sequence>MTGSNSHITILTLKVLPHFESLGKQEKIPNKMSAFRNHCPHLDSVGEITKEDLIQKSLGTCQDCKVQGPNLWACLENRCSYVGCGESQVDHSTIHSQETKHYLTVNLTTLRVWCYACSKEVFLDRKLGTQPSLPHVRQPHQIQENSVQDFKIPSNTTLKTPLVAVFDDLDIEADEEDELRARGLTGLKNIGNTCYMNAALQALSNCPPLTQFFLDCGGLARTDKKPAICKSYLKLMTELWHKSRPGSVVPTTLFQGIKTVNPTFRGYSQQDAQEFLRCLMDLLHEELKEQVMEVEEDPQTITTEETMEEDKSQSDVDFQSCESCSNSDRAENENGSRCFSEDNNETTMLIQDDENNSEMSKDWQKEKMCNKINKVNSEGEFDKDRDSISETVDLNNQETVKVQIHSRASEYITDVHSNDLSTPQILPSNEGVNPRLSASPPKSGNLWPGLAPPHKKAQSASPKRKKQHKKYRSVISDIFDGTIISSVQCLTCDRVSVTLETFQDLSLPIPGKEDLAKLHSSSHPTSIVKAGSCGEAYAPQGWIAFFMEYVKRFVVSCVPSWFWGPVVTLQDCLAAFFARDELKGDNMYSCEKCKKLRNGVKFCKVQNFPEILCIHLKRFRHELMFSTKISTHVSFPLEGLDLQPFLAKDSPAQIVTYDLLSVICHHGTASSGHYIAYCRNNLNNLWYEFDDQSVTEVSESTVQNAEAYVLFYRKSSEEAQKERRRISNLLNIMEPSLLQFYISRQWLNKFKTFAEPGPISNNDFLCIHGGVPPRKAGYIEDLVLMLPQNIWDNLYSRYGGGPAVNHLYICHTCQIEAEKIEKRRKTELEIFIRLNRAFQKEDSPATFYCISMQWFREWESFVKGKDGDPPGPIDNTKIAVTKCGNVMLRQGADSGQISEETWNFLQSIYGGGPEVILRPPVVHVDPDILQAEEKIEVETRSL</sequence>
<gene>
    <name type="primary">USP33</name>
    <name type="synonym">KIAA1097</name>
    <name type="synonym">VDU1</name>
</gene>
<organism>
    <name type="scientific">Homo sapiens</name>
    <name type="common">Human</name>
    <dbReference type="NCBI Taxonomy" id="9606"/>
    <lineage>
        <taxon>Eukaryota</taxon>
        <taxon>Metazoa</taxon>
        <taxon>Chordata</taxon>
        <taxon>Craniata</taxon>
        <taxon>Vertebrata</taxon>
        <taxon>Euteleostomi</taxon>
        <taxon>Mammalia</taxon>
        <taxon>Eutheria</taxon>
        <taxon>Euarchontoglires</taxon>
        <taxon>Primates</taxon>
        <taxon>Haplorrhini</taxon>
        <taxon>Catarrhini</taxon>
        <taxon>Hominidae</taxon>
        <taxon>Homo</taxon>
    </lineage>
</organism>
<dbReference type="EC" id="3.4.19.12"/>
<dbReference type="EMBL" id="AF383172">
    <property type="protein sequence ID" value="AAL78314.1"/>
    <property type="molecule type" value="mRNA"/>
</dbReference>
<dbReference type="EMBL" id="AF383173">
    <property type="protein sequence ID" value="AAL78315.1"/>
    <property type="molecule type" value="mRNA"/>
</dbReference>
<dbReference type="EMBL" id="AB029020">
    <property type="protein sequence ID" value="BAA83049.1"/>
    <property type="status" value="ALT_INIT"/>
    <property type="molecule type" value="mRNA"/>
</dbReference>
<dbReference type="EMBL" id="AK022864">
    <property type="protein sequence ID" value="BAB14279.1"/>
    <property type="molecule type" value="mRNA"/>
</dbReference>
<dbReference type="EMBL" id="AC114487">
    <property type="status" value="NOT_ANNOTATED_CDS"/>
    <property type="molecule type" value="Genomic_DNA"/>
</dbReference>
<dbReference type="EMBL" id="BC016663">
    <property type="protein sequence ID" value="AAH16663.1"/>
    <property type="molecule type" value="mRNA"/>
</dbReference>
<dbReference type="CCDS" id="CCDS678.1">
    <molecule id="Q8TEY7-1"/>
</dbReference>
<dbReference type="CCDS" id="CCDS679.1">
    <molecule id="Q8TEY7-2"/>
</dbReference>
<dbReference type="CCDS" id="CCDS680.1">
    <molecule id="Q8TEY7-3"/>
</dbReference>
<dbReference type="RefSeq" id="NP_055832.3">
    <molecule id="Q8TEY7-1"/>
    <property type="nucleotide sequence ID" value="NM_015017.4"/>
</dbReference>
<dbReference type="RefSeq" id="NP_963918.1">
    <molecule id="Q8TEY7-2"/>
    <property type="nucleotide sequence ID" value="NM_201624.3"/>
</dbReference>
<dbReference type="RefSeq" id="NP_963920.1">
    <molecule id="Q8TEY7-3"/>
    <property type="nucleotide sequence ID" value="NM_201626.3"/>
</dbReference>
<dbReference type="PDB" id="2UZG">
    <property type="method" value="NMR"/>
    <property type="chains" value="A=36-130"/>
</dbReference>
<dbReference type="PDBsum" id="2UZG"/>
<dbReference type="SMR" id="Q8TEY7"/>
<dbReference type="BioGRID" id="116671">
    <property type="interactions" value="153"/>
</dbReference>
<dbReference type="CORUM" id="Q8TEY7"/>
<dbReference type="DIP" id="DIP-48942N"/>
<dbReference type="FunCoup" id="Q8TEY7">
    <property type="interactions" value="3194"/>
</dbReference>
<dbReference type="IntAct" id="Q8TEY7">
    <property type="interactions" value="57"/>
</dbReference>
<dbReference type="MINT" id="Q8TEY7"/>
<dbReference type="STRING" id="9606.ENSP00000359829"/>
<dbReference type="BindingDB" id="Q8TEY7"/>
<dbReference type="ChEMBL" id="CHEMBL5291551"/>
<dbReference type="MEROPS" id="C19.037"/>
<dbReference type="GlyGen" id="Q8TEY7">
    <property type="glycosylation" value="1 site, 1 N-linked glycan (1 site)"/>
</dbReference>
<dbReference type="iPTMnet" id="Q8TEY7"/>
<dbReference type="PhosphoSitePlus" id="Q8TEY7"/>
<dbReference type="SwissPalm" id="Q8TEY7"/>
<dbReference type="BioMuta" id="USP33"/>
<dbReference type="DMDM" id="116242838"/>
<dbReference type="jPOST" id="Q8TEY7"/>
<dbReference type="MassIVE" id="Q8TEY7"/>
<dbReference type="PaxDb" id="9606-ENSP00000359829"/>
<dbReference type="PeptideAtlas" id="Q8TEY7"/>
<dbReference type="ProteomicsDB" id="74526">
    <molecule id="Q8TEY7-1"/>
</dbReference>
<dbReference type="ProteomicsDB" id="74527">
    <molecule id="Q8TEY7-2"/>
</dbReference>
<dbReference type="ProteomicsDB" id="74528">
    <molecule id="Q8TEY7-3"/>
</dbReference>
<dbReference type="Pumba" id="Q8TEY7"/>
<dbReference type="Antibodypedia" id="33489">
    <property type="antibodies" value="284 antibodies from 31 providers"/>
</dbReference>
<dbReference type="DNASU" id="23032"/>
<dbReference type="Ensembl" id="ENST00000357428.5">
    <molecule id="Q8TEY7-1"/>
    <property type="protein sequence ID" value="ENSP00000350009.1"/>
    <property type="gene ID" value="ENSG00000077254.14"/>
</dbReference>
<dbReference type="Ensembl" id="ENST00000370792.7">
    <molecule id="Q8TEY7-3"/>
    <property type="protein sequence ID" value="ENSP00000359828.3"/>
    <property type="gene ID" value="ENSG00000077254.14"/>
</dbReference>
<dbReference type="Ensembl" id="ENST00000370793.5">
    <molecule id="Q8TEY7-1"/>
    <property type="protein sequence ID" value="ENSP00000359829.1"/>
    <property type="gene ID" value="ENSG00000077254.14"/>
</dbReference>
<dbReference type="Ensembl" id="ENST00000370794.7">
    <molecule id="Q8TEY7-2"/>
    <property type="protein sequence ID" value="ENSP00000359830.3"/>
    <property type="gene ID" value="ENSG00000077254.14"/>
</dbReference>
<dbReference type="GeneID" id="23032"/>
<dbReference type="KEGG" id="hsa:23032"/>
<dbReference type="MANE-Select" id="ENST00000370794.7">
    <molecule id="Q8TEY7-2"/>
    <property type="protein sequence ID" value="ENSP00000359830.3"/>
    <property type="RefSeq nucleotide sequence ID" value="NM_201624.3"/>
    <property type="RefSeq protein sequence ID" value="NP_963918.1"/>
</dbReference>
<dbReference type="UCSC" id="uc001dht.5">
    <molecule id="Q8TEY7-1"/>
    <property type="organism name" value="human"/>
</dbReference>
<dbReference type="AGR" id="HGNC:20059"/>
<dbReference type="CTD" id="23032"/>
<dbReference type="DisGeNET" id="23032"/>
<dbReference type="GeneCards" id="USP33"/>
<dbReference type="HGNC" id="HGNC:20059">
    <property type="gene designation" value="USP33"/>
</dbReference>
<dbReference type="HPA" id="ENSG00000077254">
    <property type="expression patterns" value="Low tissue specificity"/>
</dbReference>
<dbReference type="MIM" id="615146">
    <property type="type" value="gene"/>
</dbReference>
<dbReference type="neXtProt" id="NX_Q8TEY7"/>
<dbReference type="OpenTargets" id="ENSG00000077254"/>
<dbReference type="PharmGKB" id="PA134955343"/>
<dbReference type="VEuPathDB" id="HostDB:ENSG00000077254"/>
<dbReference type="eggNOG" id="KOG1870">
    <property type="taxonomic scope" value="Eukaryota"/>
</dbReference>
<dbReference type="GeneTree" id="ENSGT00940000157311"/>
<dbReference type="HOGENOM" id="CLU_004896_0_0_1"/>
<dbReference type="InParanoid" id="Q8TEY7"/>
<dbReference type="OrthoDB" id="73004at2759"/>
<dbReference type="PAN-GO" id="Q8TEY7">
    <property type="GO annotations" value="1 GO annotation based on evolutionary models"/>
</dbReference>
<dbReference type="PhylomeDB" id="Q8TEY7"/>
<dbReference type="TreeFam" id="TF352179"/>
<dbReference type="PathwayCommons" id="Q8TEY7"/>
<dbReference type="Reactome" id="R-HSA-5689880">
    <property type="pathway name" value="Ub-specific processing proteases"/>
</dbReference>
<dbReference type="Reactome" id="R-HSA-9010553">
    <property type="pathway name" value="Regulation of expression of SLITs and ROBOs"/>
</dbReference>
<dbReference type="SignaLink" id="Q8TEY7"/>
<dbReference type="SIGNOR" id="Q8TEY7"/>
<dbReference type="BioGRID-ORCS" id="23032">
    <property type="hits" value="13 hits in 1209 CRISPR screens"/>
</dbReference>
<dbReference type="CD-CODE" id="8C2F96ED">
    <property type="entry name" value="Centrosome"/>
</dbReference>
<dbReference type="ChiTaRS" id="USP33">
    <property type="organism name" value="human"/>
</dbReference>
<dbReference type="EvolutionaryTrace" id="Q8TEY7"/>
<dbReference type="GeneWiki" id="USP33"/>
<dbReference type="GenomeRNAi" id="23032"/>
<dbReference type="Pharos" id="Q8TEY7">
    <property type="development level" value="Tbio"/>
</dbReference>
<dbReference type="PRO" id="PR:Q8TEY7"/>
<dbReference type="Proteomes" id="UP000005640">
    <property type="component" value="Chromosome 1"/>
</dbReference>
<dbReference type="RNAct" id="Q8TEY7">
    <property type="molecule type" value="protein"/>
</dbReference>
<dbReference type="Bgee" id="ENSG00000077254">
    <property type="expression patterns" value="Expressed in cerebellar vermis and 212 other cell types or tissues"/>
</dbReference>
<dbReference type="ExpressionAtlas" id="Q8TEY7">
    <property type="expression patterns" value="baseline and differential"/>
</dbReference>
<dbReference type="GO" id="GO:0005813">
    <property type="term" value="C:centrosome"/>
    <property type="evidence" value="ECO:0000314"/>
    <property type="project" value="UniProtKB"/>
</dbReference>
<dbReference type="GO" id="GO:0005737">
    <property type="term" value="C:cytoplasm"/>
    <property type="evidence" value="ECO:0000304"/>
    <property type="project" value="UniProtKB"/>
</dbReference>
<dbReference type="GO" id="GO:0005829">
    <property type="term" value="C:cytosol"/>
    <property type="evidence" value="ECO:0000304"/>
    <property type="project" value="Reactome"/>
</dbReference>
<dbReference type="GO" id="GO:0005925">
    <property type="term" value="C:focal adhesion"/>
    <property type="evidence" value="ECO:0000314"/>
    <property type="project" value="HPA"/>
</dbReference>
<dbReference type="GO" id="GO:0005794">
    <property type="term" value="C:Golgi apparatus"/>
    <property type="evidence" value="ECO:0000314"/>
    <property type="project" value="HPA"/>
</dbReference>
<dbReference type="GO" id="GO:0043025">
    <property type="term" value="C:neuronal cell body"/>
    <property type="evidence" value="ECO:0007669"/>
    <property type="project" value="Ensembl"/>
</dbReference>
<dbReference type="GO" id="GO:0005654">
    <property type="term" value="C:nucleoplasm"/>
    <property type="evidence" value="ECO:0000314"/>
    <property type="project" value="HPA"/>
</dbReference>
<dbReference type="GO" id="GO:0048471">
    <property type="term" value="C:perinuclear region of cytoplasm"/>
    <property type="evidence" value="ECO:0000314"/>
    <property type="project" value="UniProtKB"/>
</dbReference>
<dbReference type="GO" id="GO:0030891">
    <property type="term" value="C:VCB complex"/>
    <property type="evidence" value="ECO:0000304"/>
    <property type="project" value="UniProtKB"/>
</dbReference>
<dbReference type="GO" id="GO:0004843">
    <property type="term" value="F:cysteine-type deubiquitinase activity"/>
    <property type="evidence" value="ECO:0000314"/>
    <property type="project" value="UniProtKB"/>
</dbReference>
<dbReference type="GO" id="GO:0004197">
    <property type="term" value="F:cysteine-type endopeptidase activity"/>
    <property type="evidence" value="ECO:0000315"/>
    <property type="project" value="UniProtKB"/>
</dbReference>
<dbReference type="GO" id="GO:0001664">
    <property type="term" value="F:G protein-coupled receptor binding"/>
    <property type="evidence" value="ECO:0000353"/>
    <property type="project" value="UniProtKB"/>
</dbReference>
<dbReference type="GO" id="GO:0031267">
    <property type="term" value="F:small GTPase binding"/>
    <property type="evidence" value="ECO:0000353"/>
    <property type="project" value="UniProtKB"/>
</dbReference>
<dbReference type="GO" id="GO:0008270">
    <property type="term" value="F:zinc ion binding"/>
    <property type="evidence" value="ECO:0000314"/>
    <property type="project" value="UniProtKB"/>
</dbReference>
<dbReference type="GO" id="GO:0007411">
    <property type="term" value="P:axon guidance"/>
    <property type="evidence" value="ECO:0000250"/>
    <property type="project" value="UniProtKB"/>
</dbReference>
<dbReference type="GO" id="GO:0016477">
    <property type="term" value="P:cell migration"/>
    <property type="evidence" value="ECO:0000250"/>
    <property type="project" value="UniProtKB"/>
</dbReference>
<dbReference type="GO" id="GO:0009267">
    <property type="term" value="P:cellular response to starvation"/>
    <property type="evidence" value="ECO:0000314"/>
    <property type="project" value="UniProtKB"/>
</dbReference>
<dbReference type="GO" id="GO:0051298">
    <property type="term" value="P:centrosome duplication"/>
    <property type="evidence" value="ECO:0000315"/>
    <property type="project" value="UniProtKB"/>
</dbReference>
<dbReference type="GO" id="GO:0006897">
    <property type="term" value="P:endocytosis"/>
    <property type="evidence" value="ECO:0007669"/>
    <property type="project" value="UniProtKB-KW"/>
</dbReference>
<dbReference type="GO" id="GO:0032091">
    <property type="term" value="P:negative regulation of protein binding"/>
    <property type="evidence" value="ECO:0000315"/>
    <property type="project" value="UniProtKB"/>
</dbReference>
<dbReference type="GO" id="GO:0007399">
    <property type="term" value="P:nervous system development"/>
    <property type="evidence" value="ECO:0000318"/>
    <property type="project" value="GO_Central"/>
</dbReference>
<dbReference type="GO" id="GO:0032092">
    <property type="term" value="P:positive regulation of protein binding"/>
    <property type="evidence" value="ECO:0000315"/>
    <property type="project" value="UniProtKB"/>
</dbReference>
<dbReference type="GO" id="GO:0016579">
    <property type="term" value="P:protein deubiquitination"/>
    <property type="evidence" value="ECO:0000314"/>
    <property type="project" value="UniProtKB"/>
</dbReference>
<dbReference type="GO" id="GO:0071108">
    <property type="term" value="P:protein K48-linked deubiquitination"/>
    <property type="evidence" value="ECO:0000314"/>
    <property type="project" value="UniProtKB"/>
</dbReference>
<dbReference type="GO" id="GO:0070536">
    <property type="term" value="P:protein K63-linked deubiquitination"/>
    <property type="evidence" value="ECO:0000314"/>
    <property type="project" value="UniProtKB"/>
</dbReference>
<dbReference type="GO" id="GO:0050821">
    <property type="term" value="P:protein stabilization"/>
    <property type="evidence" value="ECO:0000315"/>
    <property type="project" value="CACAO"/>
</dbReference>
<dbReference type="GO" id="GO:0010506">
    <property type="term" value="P:regulation of autophagy"/>
    <property type="evidence" value="ECO:0000315"/>
    <property type="project" value="UniProtKB"/>
</dbReference>
<dbReference type="GO" id="GO:0008277">
    <property type="term" value="P:regulation of G protein-coupled receptor signaling pathway"/>
    <property type="evidence" value="ECO:0000315"/>
    <property type="project" value="UniProtKB"/>
</dbReference>
<dbReference type="GO" id="GO:0006511">
    <property type="term" value="P:ubiquitin-dependent protein catabolic process"/>
    <property type="evidence" value="ECO:0000304"/>
    <property type="project" value="UniProtKB"/>
</dbReference>
<dbReference type="CDD" id="cd02674">
    <property type="entry name" value="Peptidase_C19R"/>
    <property type="match status" value="1"/>
</dbReference>
<dbReference type="FunFam" id="3.30.2230.10:FF:000001">
    <property type="entry name" value="Ubiquitinyl hydrolase 1"/>
    <property type="match status" value="1"/>
</dbReference>
<dbReference type="FunFam" id="3.30.2230.10:FF:000002">
    <property type="entry name" value="Ubiquitinyl hydrolase 1"/>
    <property type="match status" value="1"/>
</dbReference>
<dbReference type="FunFam" id="3.30.40.10:FF:000065">
    <property type="entry name" value="Ubiquitinyl hydrolase 1"/>
    <property type="match status" value="1"/>
</dbReference>
<dbReference type="FunFam" id="3.90.70.10:FF:000056">
    <property type="entry name" value="Ubiquitinyl hydrolase 1"/>
    <property type="match status" value="1"/>
</dbReference>
<dbReference type="Gene3D" id="3.90.70.10">
    <property type="entry name" value="Cysteine proteinases"/>
    <property type="match status" value="2"/>
</dbReference>
<dbReference type="Gene3D" id="3.30.2230.10">
    <property type="entry name" value="DUSP-like"/>
    <property type="match status" value="2"/>
</dbReference>
<dbReference type="Gene3D" id="3.30.40.10">
    <property type="entry name" value="Zinc/RING finger domain, C3HC4 (zinc finger)"/>
    <property type="match status" value="1"/>
</dbReference>
<dbReference type="InterPro" id="IPR035927">
    <property type="entry name" value="DUSP-like_sf"/>
</dbReference>
<dbReference type="InterPro" id="IPR038765">
    <property type="entry name" value="Papain-like_cys_pep_sf"/>
</dbReference>
<dbReference type="InterPro" id="IPR006615">
    <property type="entry name" value="Pept_C19_DUSP"/>
</dbReference>
<dbReference type="InterPro" id="IPR001394">
    <property type="entry name" value="Peptidase_C19_UCH"/>
</dbReference>
<dbReference type="InterPro" id="IPR050185">
    <property type="entry name" value="Ub_carboxyl-term_hydrolase"/>
</dbReference>
<dbReference type="InterPro" id="IPR018200">
    <property type="entry name" value="USP_CS"/>
</dbReference>
<dbReference type="InterPro" id="IPR028889">
    <property type="entry name" value="USP_dom"/>
</dbReference>
<dbReference type="InterPro" id="IPR013083">
    <property type="entry name" value="Znf_RING/FYVE/PHD"/>
</dbReference>
<dbReference type="InterPro" id="IPR001607">
    <property type="entry name" value="Znf_UBP"/>
</dbReference>
<dbReference type="PANTHER" id="PTHR21646">
    <property type="entry name" value="UBIQUITIN CARBOXYL-TERMINAL HYDROLASE"/>
    <property type="match status" value="1"/>
</dbReference>
<dbReference type="PANTHER" id="PTHR21646:SF32">
    <property type="entry name" value="UBIQUITIN CARBOXYL-TERMINAL HYDROLASE 33"/>
    <property type="match status" value="1"/>
</dbReference>
<dbReference type="Pfam" id="PF06337">
    <property type="entry name" value="DUSP"/>
    <property type="match status" value="2"/>
</dbReference>
<dbReference type="Pfam" id="PF00443">
    <property type="entry name" value="UCH"/>
    <property type="match status" value="1"/>
</dbReference>
<dbReference type="Pfam" id="PF02148">
    <property type="entry name" value="zf-UBP"/>
    <property type="match status" value="1"/>
</dbReference>
<dbReference type="SMART" id="SM00695">
    <property type="entry name" value="DUSP"/>
    <property type="match status" value="2"/>
</dbReference>
<dbReference type="SMART" id="SM00290">
    <property type="entry name" value="ZnF_UBP"/>
    <property type="match status" value="1"/>
</dbReference>
<dbReference type="SUPFAM" id="SSF54001">
    <property type="entry name" value="Cysteine proteinases"/>
    <property type="match status" value="1"/>
</dbReference>
<dbReference type="SUPFAM" id="SSF143791">
    <property type="entry name" value="DUSP-like"/>
    <property type="match status" value="2"/>
</dbReference>
<dbReference type="SUPFAM" id="SSF57850">
    <property type="entry name" value="RING/U-box"/>
    <property type="match status" value="1"/>
</dbReference>
<dbReference type="PROSITE" id="PS51283">
    <property type="entry name" value="DUSP"/>
    <property type="match status" value="2"/>
</dbReference>
<dbReference type="PROSITE" id="PS00972">
    <property type="entry name" value="USP_1"/>
    <property type="match status" value="1"/>
</dbReference>
<dbReference type="PROSITE" id="PS00973">
    <property type="entry name" value="USP_2"/>
    <property type="match status" value="1"/>
</dbReference>
<dbReference type="PROSITE" id="PS50235">
    <property type="entry name" value="USP_3"/>
    <property type="match status" value="1"/>
</dbReference>
<dbReference type="PROSITE" id="PS50271">
    <property type="entry name" value="ZF_UBP"/>
    <property type="match status" value="1"/>
</dbReference>
<proteinExistence type="evidence at protein level"/>
<protein>
    <recommendedName>
        <fullName>Ubiquitin carboxyl-terminal hydrolase 33</fullName>
        <ecNumber>3.4.19.12</ecNumber>
    </recommendedName>
    <alternativeName>
        <fullName>Deubiquitinating enzyme 33</fullName>
    </alternativeName>
    <alternativeName>
        <fullName>Ubiquitin thioesterase 33</fullName>
    </alternativeName>
    <alternativeName>
        <fullName>Ubiquitin-specific-processing protease 33</fullName>
    </alternativeName>
    <alternativeName>
        <fullName>VHL-interacting deubiquitinating enzyme 1</fullName>
        <shortName>hVDU1</shortName>
    </alternativeName>
</protein>
<feature type="chain" id="PRO_0000080664" description="Ubiquitin carboxyl-terminal hydrolase 33">
    <location>
        <begin position="1"/>
        <end position="942"/>
    </location>
</feature>
<feature type="domain" description="USP">
    <location>
        <begin position="185"/>
        <end position="715"/>
    </location>
</feature>
<feature type="domain" description="DUSP 1" evidence="2">
    <location>
        <begin position="717"/>
        <end position="810"/>
    </location>
</feature>
<feature type="domain" description="DUSP 2" evidence="2">
    <location>
        <begin position="818"/>
        <end position="921"/>
    </location>
</feature>
<feature type="zinc finger region" description="UBP-type" evidence="1">
    <location>
        <begin position="37"/>
        <end position="140"/>
    </location>
</feature>
<feature type="region of interest" description="Disordered" evidence="5">
    <location>
        <begin position="294"/>
        <end position="357"/>
    </location>
</feature>
<feature type="region of interest" description="Disordered" evidence="5">
    <location>
        <begin position="419"/>
        <end position="469"/>
    </location>
</feature>
<feature type="compositionally biased region" description="Polar residues" evidence="5">
    <location>
        <begin position="315"/>
        <end position="327"/>
    </location>
</feature>
<feature type="compositionally biased region" description="Polar residues" evidence="5">
    <location>
        <begin position="419"/>
        <end position="431"/>
    </location>
</feature>
<feature type="compositionally biased region" description="Basic residues" evidence="5">
    <location>
        <begin position="453"/>
        <end position="469"/>
    </location>
</feature>
<feature type="active site" description="Nucleophile">
    <location>
        <position position="194"/>
    </location>
</feature>
<feature type="active site" description="Proton acceptor" evidence="3 4">
    <location>
        <position position="673"/>
    </location>
</feature>
<feature type="binding site" evidence="1">
    <location>
        <position position="39"/>
    </location>
    <ligand>
        <name>Zn(2+)</name>
        <dbReference type="ChEBI" id="CHEBI:29105"/>
        <label>1</label>
    </ligand>
</feature>
<feature type="binding site" evidence="1">
    <location>
        <position position="41"/>
    </location>
    <ligand>
        <name>Zn(2+)</name>
        <dbReference type="ChEBI" id="CHEBI:29105"/>
        <label>1</label>
    </ligand>
</feature>
<feature type="binding site" evidence="1">
    <location>
        <position position="61"/>
    </location>
    <ligand>
        <name>Zn(2+)</name>
        <dbReference type="ChEBI" id="CHEBI:29105"/>
        <label>2</label>
    </ligand>
</feature>
<feature type="binding site" evidence="1">
    <location>
        <position position="64"/>
    </location>
    <ligand>
        <name>Zn(2+)</name>
        <dbReference type="ChEBI" id="CHEBI:29105"/>
        <label>2</label>
    </ligand>
</feature>
<feature type="binding site" evidence="1">
    <location>
        <position position="74"/>
    </location>
    <ligand>
        <name>Zn(2+)</name>
        <dbReference type="ChEBI" id="CHEBI:29105"/>
        <label>3</label>
    </ligand>
</feature>
<feature type="binding site" evidence="1">
    <location>
        <position position="79"/>
    </location>
    <ligand>
        <name>Zn(2+)</name>
        <dbReference type="ChEBI" id="CHEBI:29105"/>
        <label>3</label>
    </ligand>
</feature>
<feature type="binding site" evidence="1">
    <location>
        <position position="84"/>
    </location>
    <ligand>
        <name>Zn(2+)</name>
        <dbReference type="ChEBI" id="CHEBI:29105"/>
        <label>2</label>
    </ligand>
</feature>
<feature type="binding site" evidence="1">
    <location>
        <position position="91"/>
    </location>
    <ligand>
        <name>Zn(2+)</name>
        <dbReference type="ChEBI" id="CHEBI:29105"/>
        <label>2</label>
    </ligand>
</feature>
<feature type="binding site" evidence="1">
    <location>
        <position position="95"/>
    </location>
    <ligand>
        <name>Zn(2+)</name>
        <dbReference type="ChEBI" id="CHEBI:29105"/>
        <label>3</label>
    </ligand>
</feature>
<feature type="binding site" evidence="1">
    <location>
        <position position="101"/>
    </location>
    <ligand>
        <name>Zn(2+)</name>
        <dbReference type="ChEBI" id="CHEBI:29105"/>
        <label>3</label>
    </ligand>
</feature>
<feature type="binding site" evidence="1">
    <location>
        <position position="114"/>
    </location>
    <ligand>
        <name>Zn(2+)</name>
        <dbReference type="ChEBI" id="CHEBI:29105"/>
        <label>1</label>
    </ligand>
</feature>
<feature type="binding site" evidence="1">
    <location>
        <position position="117"/>
    </location>
    <ligand>
        <name>Zn(2+)</name>
        <dbReference type="ChEBI" id="CHEBI:29105"/>
        <label>1</label>
    </ligand>
</feature>
<feature type="modified residue" description="Phosphoserine" evidence="21">
    <location>
        <position position="377"/>
    </location>
</feature>
<feature type="modified residue" description="Phosphoserine" evidence="20">
    <location>
        <position position="439"/>
    </location>
</feature>
<feature type="splice variant" id="VSP_008591" description="In isoform 2." evidence="15 16">
    <location>
        <begin position="1"/>
        <end position="31"/>
    </location>
</feature>
<feature type="splice variant" id="VSP_008592" description="In isoform 3." evidence="17 18">
    <location>
        <begin position="552"/>
        <end position="559"/>
    </location>
</feature>
<feature type="splice variant" id="VSP_008593" description="In isoform 3." evidence="17 18">
    <original>LNR</original>
    <variation>VKK</variation>
    <location>
        <begin position="834"/>
        <end position="836"/>
    </location>
</feature>
<feature type="splice variant" id="VSP_008594" description="In isoform 3." evidence="17 18">
    <location>
        <begin position="837"/>
        <end position="942"/>
    </location>
</feature>
<feature type="mutagenesis site" description="Abolishes deubiquitinating activity. Does not inhibit lysosomal trafficking of ADRB2; when associated with Q-673." evidence="10 11 14">
    <original>C</original>
    <variation>S</variation>
    <location>
        <position position="194"/>
    </location>
</feature>
<feature type="mutagenesis site" description="Abolishes deubiquitinating activity. Does not inhibit lysosomal trafficking of ADRB2; when associated with S-194." evidence="10 11 14">
    <original>H</original>
    <variation>Q</variation>
    <location>
        <position position="673"/>
    </location>
</feature>
<feature type="sequence conflict" description="In Ref. 1; AAL78314/AAL78315 and 2; BAA83049." evidence="19" ref="1 2">
    <original>H</original>
    <variation>Y</variation>
    <location>
        <position position="241"/>
    </location>
</feature>
<feature type="sequence conflict" description="In Ref. 3; BAB14279." evidence="19" ref="3">
    <original>S</original>
    <variation>L</variation>
    <location>
        <position position="428"/>
    </location>
</feature>
<feature type="sequence conflict" description="In Ref. 3; BAB14279." evidence="19" ref="3">
    <original>K</original>
    <variation>R</variation>
    <location>
        <position position="617"/>
    </location>
</feature>
<feature type="helix" evidence="22">
    <location>
        <begin position="40"/>
        <end position="44"/>
    </location>
</feature>
<feature type="helix" evidence="22">
    <location>
        <begin position="50"/>
        <end position="56"/>
    </location>
</feature>
<feature type="turn" evidence="22">
    <location>
        <begin position="57"/>
        <end position="59"/>
    </location>
</feature>
<feature type="strand" evidence="22">
    <location>
        <begin position="62"/>
        <end position="64"/>
    </location>
</feature>
<feature type="strand" evidence="22">
    <location>
        <begin position="72"/>
        <end position="74"/>
    </location>
</feature>
<feature type="turn" evidence="22">
    <location>
        <begin position="86"/>
        <end position="89"/>
    </location>
</feature>
<feature type="helix" evidence="22">
    <location>
        <begin position="91"/>
        <end position="98"/>
    </location>
</feature>
<feature type="strand" evidence="22">
    <location>
        <begin position="103"/>
        <end position="106"/>
    </location>
</feature>
<feature type="turn" evidence="22">
    <location>
        <begin position="107"/>
        <end position="110"/>
    </location>
</feature>
<feature type="strand" evidence="22">
    <location>
        <begin position="111"/>
        <end position="114"/>
    </location>
</feature>
<feature type="turn" evidence="22">
    <location>
        <begin position="115"/>
        <end position="118"/>
    </location>
</feature>
<feature type="strand" evidence="22">
    <location>
        <begin position="119"/>
        <end position="121"/>
    </location>
</feature>
<name>UBP33_HUMAN</name>